<keyword id="KW-0007">Acetylation</keyword>
<keyword id="KW-0040">ANK repeat</keyword>
<keyword id="KW-0963">Cytoplasm</keyword>
<keyword id="KW-0597">Phosphoprotein</keyword>
<keyword id="KW-1185">Reference proteome</keyword>
<keyword id="KW-0677">Repeat</keyword>
<keyword id="KW-0728">SH3 domain</keyword>
<accession>Q8MJ49</accession>
<name>OSTF1_PIG</name>
<organism>
    <name type="scientific">Sus scrofa</name>
    <name type="common">Pig</name>
    <dbReference type="NCBI Taxonomy" id="9823"/>
    <lineage>
        <taxon>Eukaryota</taxon>
        <taxon>Metazoa</taxon>
        <taxon>Chordata</taxon>
        <taxon>Craniata</taxon>
        <taxon>Vertebrata</taxon>
        <taxon>Euteleostomi</taxon>
        <taxon>Mammalia</taxon>
        <taxon>Eutheria</taxon>
        <taxon>Laurasiatheria</taxon>
        <taxon>Artiodactyla</taxon>
        <taxon>Suina</taxon>
        <taxon>Suidae</taxon>
        <taxon>Sus</taxon>
    </lineage>
</organism>
<gene>
    <name type="primary">OSTF1</name>
</gene>
<protein>
    <recommendedName>
        <fullName>Osteoclast-stimulating factor 1</fullName>
    </recommendedName>
</protein>
<proteinExistence type="evidence at transcript level"/>
<evidence type="ECO:0000250" key="1"/>
<evidence type="ECO:0000250" key="2">
    <source>
        <dbReference type="UniProtKB" id="Q92882"/>
    </source>
</evidence>
<evidence type="ECO:0000255" key="3">
    <source>
        <dbReference type="PROSITE-ProRule" id="PRU00192"/>
    </source>
</evidence>
<comment type="function">
    <text evidence="1">Induces bone resorption, acting probably through a signaling cascade which results in the secretion of factor(s) enhancing osteoclast formation and activity.</text>
</comment>
<comment type="subunit">
    <text evidence="1">Interacts with SRC and SMN1. Interacts with FASLG (By similarity).</text>
</comment>
<comment type="subcellular location">
    <subcellularLocation>
        <location evidence="1">Cytoplasm</location>
    </subcellularLocation>
</comment>
<comment type="domain">
    <text evidence="1">The SH3 domain mediates interaction with SMN1.</text>
</comment>
<dbReference type="EMBL" id="AF523268">
    <property type="protein sequence ID" value="AAM82161.1"/>
    <property type="molecule type" value="mRNA"/>
</dbReference>
<dbReference type="RefSeq" id="NP_999170.1">
    <property type="nucleotide sequence ID" value="NM_214005.1"/>
</dbReference>
<dbReference type="SMR" id="Q8MJ49"/>
<dbReference type="FunCoup" id="Q8MJ49">
    <property type="interactions" value="689"/>
</dbReference>
<dbReference type="STRING" id="9823.ENSSSCP00000005664"/>
<dbReference type="PaxDb" id="9823-ENSSSCP00000005664"/>
<dbReference type="PeptideAtlas" id="Q8MJ49"/>
<dbReference type="Ensembl" id="ENSSSCT00000042535.2">
    <property type="protein sequence ID" value="ENSSSCP00000040545.1"/>
    <property type="gene ID" value="ENSSSCG00000005273.5"/>
</dbReference>
<dbReference type="Ensembl" id="ENSSSCT00015045728.1">
    <property type="protein sequence ID" value="ENSSSCP00015018103.1"/>
    <property type="gene ID" value="ENSSSCG00015033274.1"/>
</dbReference>
<dbReference type="Ensembl" id="ENSSSCT00025045439.1">
    <property type="protein sequence ID" value="ENSSSCP00025019372.1"/>
    <property type="gene ID" value="ENSSSCG00025033181.1"/>
</dbReference>
<dbReference type="Ensembl" id="ENSSSCT00030066651.1">
    <property type="protein sequence ID" value="ENSSSCP00030030529.1"/>
    <property type="gene ID" value="ENSSSCG00030047635.1"/>
</dbReference>
<dbReference type="Ensembl" id="ENSSSCT00040049428.1">
    <property type="protein sequence ID" value="ENSSSCP00040020544.1"/>
    <property type="gene ID" value="ENSSSCG00040036826.1"/>
</dbReference>
<dbReference type="Ensembl" id="ENSSSCT00045048507.1">
    <property type="protein sequence ID" value="ENSSSCP00045033723.1"/>
    <property type="gene ID" value="ENSSSCG00045028413.1"/>
</dbReference>
<dbReference type="Ensembl" id="ENSSSCT00050105690.1">
    <property type="protein sequence ID" value="ENSSSCP00050046549.1"/>
    <property type="gene ID" value="ENSSSCG00050076870.1"/>
</dbReference>
<dbReference type="Ensembl" id="ENSSSCT00055049870.1">
    <property type="protein sequence ID" value="ENSSSCP00055039844.1"/>
    <property type="gene ID" value="ENSSSCG00055025207.1"/>
</dbReference>
<dbReference type="Ensembl" id="ENSSSCT00060021859.1">
    <property type="protein sequence ID" value="ENSSSCP00060009020.1"/>
    <property type="gene ID" value="ENSSSCG00060016387.1"/>
</dbReference>
<dbReference type="Ensembl" id="ENSSSCT00065103139.1">
    <property type="protein sequence ID" value="ENSSSCP00065045549.1"/>
    <property type="gene ID" value="ENSSSCG00065074717.1"/>
</dbReference>
<dbReference type="Ensembl" id="ENSSSCT00070057116.1">
    <property type="protein sequence ID" value="ENSSSCP00070048545.1"/>
    <property type="gene ID" value="ENSSSCG00070028477.1"/>
</dbReference>
<dbReference type="Ensembl" id="ENSSSCT00070057119.1">
    <property type="protein sequence ID" value="ENSSSCP00070048548.1"/>
    <property type="gene ID" value="ENSSSCG00070028477.1"/>
</dbReference>
<dbReference type="Ensembl" id="ENSSSCT00115005375">
    <property type="protein sequence ID" value="ENSSSCP00115005006"/>
    <property type="gene ID" value="ENSSSCG00115003176"/>
</dbReference>
<dbReference type="GeneID" id="397066"/>
<dbReference type="KEGG" id="ssc:397066"/>
<dbReference type="CTD" id="26578"/>
<dbReference type="VGNC" id="VGNC:91085">
    <property type="gene designation" value="OSTF1"/>
</dbReference>
<dbReference type="eggNOG" id="ENOG502QTZB">
    <property type="taxonomic scope" value="Eukaryota"/>
</dbReference>
<dbReference type="GeneTree" id="ENSGT00920000149159"/>
<dbReference type="HOGENOM" id="CLU_092255_0_0_1"/>
<dbReference type="InParanoid" id="Q8MJ49"/>
<dbReference type="OMA" id="NMSWLRE"/>
<dbReference type="OrthoDB" id="207120at2759"/>
<dbReference type="TreeFam" id="TF314534"/>
<dbReference type="Reactome" id="R-SSC-6798695">
    <property type="pathway name" value="Neutrophil degranulation"/>
</dbReference>
<dbReference type="ChiTaRS" id="OSTF1">
    <property type="organism name" value="pig"/>
</dbReference>
<dbReference type="Proteomes" id="UP000008227">
    <property type="component" value="Chromosome 1"/>
</dbReference>
<dbReference type="Proteomes" id="UP000314985">
    <property type="component" value="Chromosome 1"/>
</dbReference>
<dbReference type="Proteomes" id="UP000694570">
    <property type="component" value="Unplaced"/>
</dbReference>
<dbReference type="Proteomes" id="UP000694571">
    <property type="component" value="Unplaced"/>
</dbReference>
<dbReference type="Proteomes" id="UP000694720">
    <property type="component" value="Unplaced"/>
</dbReference>
<dbReference type="Proteomes" id="UP000694722">
    <property type="component" value="Unplaced"/>
</dbReference>
<dbReference type="Proteomes" id="UP000694723">
    <property type="component" value="Unplaced"/>
</dbReference>
<dbReference type="Proteomes" id="UP000694724">
    <property type="component" value="Unplaced"/>
</dbReference>
<dbReference type="Proteomes" id="UP000694725">
    <property type="component" value="Unplaced"/>
</dbReference>
<dbReference type="Proteomes" id="UP000694726">
    <property type="component" value="Unplaced"/>
</dbReference>
<dbReference type="Proteomes" id="UP000694727">
    <property type="component" value="Unplaced"/>
</dbReference>
<dbReference type="Proteomes" id="UP000694728">
    <property type="component" value="Unplaced"/>
</dbReference>
<dbReference type="Bgee" id="ENSSSCG00000005273">
    <property type="expression patterns" value="Expressed in spleen and 44 other cell types or tissues"/>
</dbReference>
<dbReference type="ExpressionAtlas" id="Q8MJ49">
    <property type="expression patterns" value="baseline and differential"/>
</dbReference>
<dbReference type="GO" id="GO:0005737">
    <property type="term" value="C:cytoplasm"/>
    <property type="evidence" value="ECO:0007669"/>
    <property type="project" value="UniProtKB-SubCell"/>
</dbReference>
<dbReference type="GO" id="GO:0007165">
    <property type="term" value="P:signal transduction"/>
    <property type="evidence" value="ECO:0000318"/>
    <property type="project" value="GO_Central"/>
</dbReference>
<dbReference type="CDD" id="cd11772">
    <property type="entry name" value="SH3_OSTF1"/>
    <property type="match status" value="1"/>
</dbReference>
<dbReference type="FunFam" id="1.25.40.20:FF:000066">
    <property type="entry name" value="Osteoclast-stimulating factor 1"/>
    <property type="match status" value="1"/>
</dbReference>
<dbReference type="FunFam" id="2.30.30.40:FF:000158">
    <property type="entry name" value="Osteoclast-stimulating factor 1"/>
    <property type="match status" value="1"/>
</dbReference>
<dbReference type="Gene3D" id="1.25.40.20">
    <property type="entry name" value="Ankyrin repeat-containing domain"/>
    <property type="match status" value="1"/>
</dbReference>
<dbReference type="Gene3D" id="2.30.30.40">
    <property type="entry name" value="SH3 Domains"/>
    <property type="match status" value="1"/>
</dbReference>
<dbReference type="InterPro" id="IPR002110">
    <property type="entry name" value="Ankyrin_rpt"/>
</dbReference>
<dbReference type="InterPro" id="IPR036770">
    <property type="entry name" value="Ankyrin_rpt-contain_sf"/>
</dbReference>
<dbReference type="InterPro" id="IPR036028">
    <property type="entry name" value="SH3-like_dom_sf"/>
</dbReference>
<dbReference type="InterPro" id="IPR001452">
    <property type="entry name" value="SH3_domain"/>
</dbReference>
<dbReference type="PANTHER" id="PTHR24155">
    <property type="entry name" value="OSTEOCLAST-STIMULATING FACTOR 1"/>
    <property type="match status" value="1"/>
</dbReference>
<dbReference type="PANTHER" id="PTHR24155:SF10">
    <property type="entry name" value="OSTEOCLAST-STIMULATING FACTOR 1"/>
    <property type="match status" value="1"/>
</dbReference>
<dbReference type="Pfam" id="PF00023">
    <property type="entry name" value="Ank"/>
    <property type="match status" value="1"/>
</dbReference>
<dbReference type="Pfam" id="PF12796">
    <property type="entry name" value="Ank_2"/>
    <property type="match status" value="1"/>
</dbReference>
<dbReference type="Pfam" id="PF00018">
    <property type="entry name" value="SH3_1"/>
    <property type="match status" value="1"/>
</dbReference>
<dbReference type="PRINTS" id="PR01415">
    <property type="entry name" value="ANKYRIN"/>
</dbReference>
<dbReference type="PRINTS" id="PR00499">
    <property type="entry name" value="P67PHOX"/>
</dbReference>
<dbReference type="PRINTS" id="PR00452">
    <property type="entry name" value="SH3DOMAIN"/>
</dbReference>
<dbReference type="SMART" id="SM00248">
    <property type="entry name" value="ANK"/>
    <property type="match status" value="3"/>
</dbReference>
<dbReference type="SMART" id="SM00326">
    <property type="entry name" value="SH3"/>
    <property type="match status" value="1"/>
</dbReference>
<dbReference type="SUPFAM" id="SSF48403">
    <property type="entry name" value="Ankyrin repeat"/>
    <property type="match status" value="1"/>
</dbReference>
<dbReference type="SUPFAM" id="SSF50044">
    <property type="entry name" value="SH3-domain"/>
    <property type="match status" value="1"/>
</dbReference>
<dbReference type="PROSITE" id="PS50297">
    <property type="entry name" value="ANK_REP_REGION"/>
    <property type="match status" value="1"/>
</dbReference>
<dbReference type="PROSITE" id="PS50088">
    <property type="entry name" value="ANK_REPEAT"/>
    <property type="match status" value="1"/>
</dbReference>
<dbReference type="PROSITE" id="PS50002">
    <property type="entry name" value="SH3"/>
    <property type="match status" value="1"/>
</dbReference>
<feature type="initiator methionine" description="Removed" evidence="2">
    <location>
        <position position="1"/>
    </location>
</feature>
<feature type="chain" id="PRO_0000238955" description="Osteoclast-stimulating factor 1">
    <location>
        <begin position="2"/>
        <end position="214"/>
    </location>
</feature>
<feature type="domain" description="SH3" evidence="3">
    <location>
        <begin position="12"/>
        <end position="71"/>
    </location>
</feature>
<feature type="repeat" description="ANK 1">
    <location>
        <begin position="72"/>
        <end position="101"/>
    </location>
</feature>
<feature type="repeat" description="ANK 2">
    <location>
        <begin position="105"/>
        <end position="135"/>
    </location>
</feature>
<feature type="repeat" description="ANK 3">
    <location>
        <begin position="139"/>
        <end position="168"/>
    </location>
</feature>
<feature type="modified residue" description="N-acetylserine" evidence="2">
    <location>
        <position position="2"/>
    </location>
</feature>
<feature type="modified residue" description="Phosphothreonine" evidence="2">
    <location>
        <position position="200"/>
    </location>
</feature>
<feature type="modified residue" description="Phosphoserine" evidence="2">
    <location>
        <position position="202"/>
    </location>
</feature>
<feature type="modified residue" description="Phosphoserine" evidence="2">
    <location>
        <position position="213"/>
    </location>
</feature>
<reference key="1">
    <citation type="submission" date="2002-06" db="EMBL/GenBank/DDBJ databases">
        <authorList>
            <person name="Guo J.H."/>
        </authorList>
    </citation>
    <scope>NUCLEOTIDE SEQUENCE [MRNA]</scope>
    <source>
        <tissue>Blood</tissue>
    </source>
</reference>
<sequence>MSKPPPKPVKPGQVKVFRALYTFEPRTPDELYFEEGDIIYITDMSDTNWWKGTSKGRTGLIPSNYVAEQAESIDNPLHEAAKRGNLSWLRECLDNRVGVNGLDKAGSTALYWACHGGHKDIVDMLFTQPNIELNQQNKLGDTALHAAAWKGYADIVQLLLAKGARTDLRNNEKKLALDMATNAACASLLKKKQGTDAVRTLSNAEDYLDDEDSD</sequence>